<keyword id="KW-0030">Aminoacyl-tRNA synthetase</keyword>
<keyword id="KW-0067">ATP-binding</keyword>
<keyword id="KW-0963">Cytoplasm</keyword>
<keyword id="KW-0436">Ligase</keyword>
<keyword id="KW-0479">Metal-binding</keyword>
<keyword id="KW-0547">Nucleotide-binding</keyword>
<keyword id="KW-0648">Protein biosynthesis</keyword>
<keyword id="KW-1185">Reference proteome</keyword>
<keyword id="KW-0862">Zinc</keyword>
<comment type="function">
    <text evidence="1">Catalyzes the attachment of glutamate to tRNA(Glu) in a two-step reaction: glutamate is first activated by ATP to form Glu-AMP and then transferred to the acceptor end of tRNA(Glu).</text>
</comment>
<comment type="catalytic activity">
    <reaction evidence="1">
        <text>tRNA(Glu) + L-glutamate + ATP = L-glutamyl-tRNA(Glu) + AMP + diphosphate</text>
        <dbReference type="Rhea" id="RHEA:23540"/>
        <dbReference type="Rhea" id="RHEA-COMP:9663"/>
        <dbReference type="Rhea" id="RHEA-COMP:9680"/>
        <dbReference type="ChEBI" id="CHEBI:29985"/>
        <dbReference type="ChEBI" id="CHEBI:30616"/>
        <dbReference type="ChEBI" id="CHEBI:33019"/>
        <dbReference type="ChEBI" id="CHEBI:78442"/>
        <dbReference type="ChEBI" id="CHEBI:78520"/>
        <dbReference type="ChEBI" id="CHEBI:456215"/>
        <dbReference type="EC" id="6.1.1.17"/>
    </reaction>
</comment>
<comment type="cofactor">
    <cofactor evidence="1">
        <name>Zn(2+)</name>
        <dbReference type="ChEBI" id="CHEBI:29105"/>
    </cofactor>
    <text evidence="1">Binds 1 zinc ion per subunit.</text>
</comment>
<comment type="subunit">
    <text evidence="1">Monomer.</text>
</comment>
<comment type="subcellular location">
    <subcellularLocation>
        <location evidence="1">Cytoplasm</location>
    </subcellularLocation>
</comment>
<comment type="similarity">
    <text evidence="1">Belongs to the class-I aminoacyl-tRNA synthetase family. Glutamate--tRNA ligase type 1 subfamily.</text>
</comment>
<gene>
    <name evidence="1" type="primary">gltX</name>
    <name type="ordered locus">plu1401</name>
</gene>
<protein>
    <recommendedName>
        <fullName evidence="1">Glutamate--tRNA ligase</fullName>
        <ecNumber evidence="1">6.1.1.17</ecNumber>
    </recommendedName>
    <alternativeName>
        <fullName evidence="1">Glutamyl-tRNA synthetase</fullName>
        <shortName evidence="1">GluRS</shortName>
    </alternativeName>
</protein>
<accession>Q7N6Y2</accession>
<sequence length="472" mass="53783">MSKIKTRFAPSPTGYLHVGGARTALYSWLYSRHNKGEFVLRIEDTDLERSTQEAINAIMDGMNWLNLNWDEGPYYQTKRFDRYNQAIDQMLEQGNAYRCYCSKEHLEALRETQMANGEKPRYDGRCRDNPCQHDPAQPHVVRFRNPQEGSVIFNDQIRGPIEFSNQELDDLIIRRTDGSPTYNFCVVIDDWDMEITHVIRGEDHINNTPRQINILKALGAPVPEYAHVSMILGDDGKKLSKRHGAVSVMQYRDDGYLPEALLNYLVRLGWSHGDQEIFSIEEMTELFSLDAINKSASAFNTEKLQWLNHHYINTLPPEKVAVHLAWHIEQQGIDSRNGPQLVDLIKLLGERCKTLKEMAESCRYFYEDFAEFDADAAKKHLRPVARQPLEVVHAKLASITDWTPENVHHAIQSTADELEVGMGKVGMPLRVAATGAGQSPGVDVTIHAIGQPRTLSRINQALEFIAQRETQS</sequence>
<dbReference type="EC" id="6.1.1.17" evidence="1"/>
<dbReference type="EMBL" id="BX571863">
    <property type="protein sequence ID" value="CAE13694.1"/>
    <property type="molecule type" value="Genomic_DNA"/>
</dbReference>
<dbReference type="RefSeq" id="WP_011145709.1">
    <property type="nucleotide sequence ID" value="NC_005126.1"/>
</dbReference>
<dbReference type="SMR" id="Q7N6Y2"/>
<dbReference type="STRING" id="243265.plu1401"/>
<dbReference type="GeneID" id="48847682"/>
<dbReference type="KEGG" id="plu:plu1401"/>
<dbReference type="eggNOG" id="COG0008">
    <property type="taxonomic scope" value="Bacteria"/>
</dbReference>
<dbReference type="HOGENOM" id="CLU_015768_6_0_6"/>
<dbReference type="OrthoDB" id="9807503at2"/>
<dbReference type="Proteomes" id="UP000002514">
    <property type="component" value="Chromosome"/>
</dbReference>
<dbReference type="GO" id="GO:0005829">
    <property type="term" value="C:cytosol"/>
    <property type="evidence" value="ECO:0007669"/>
    <property type="project" value="TreeGrafter"/>
</dbReference>
<dbReference type="GO" id="GO:0005524">
    <property type="term" value="F:ATP binding"/>
    <property type="evidence" value="ECO:0007669"/>
    <property type="project" value="UniProtKB-UniRule"/>
</dbReference>
<dbReference type="GO" id="GO:0004818">
    <property type="term" value="F:glutamate-tRNA ligase activity"/>
    <property type="evidence" value="ECO:0007669"/>
    <property type="project" value="UniProtKB-UniRule"/>
</dbReference>
<dbReference type="GO" id="GO:0000049">
    <property type="term" value="F:tRNA binding"/>
    <property type="evidence" value="ECO:0007669"/>
    <property type="project" value="InterPro"/>
</dbReference>
<dbReference type="GO" id="GO:0008270">
    <property type="term" value="F:zinc ion binding"/>
    <property type="evidence" value="ECO:0007669"/>
    <property type="project" value="UniProtKB-UniRule"/>
</dbReference>
<dbReference type="GO" id="GO:0006424">
    <property type="term" value="P:glutamyl-tRNA aminoacylation"/>
    <property type="evidence" value="ECO:0007669"/>
    <property type="project" value="UniProtKB-UniRule"/>
</dbReference>
<dbReference type="CDD" id="cd00808">
    <property type="entry name" value="GluRS_core"/>
    <property type="match status" value="1"/>
</dbReference>
<dbReference type="FunFam" id="1.10.10.350:FF:000001">
    <property type="entry name" value="Glutamate--tRNA ligase"/>
    <property type="match status" value="1"/>
</dbReference>
<dbReference type="FunFam" id="3.40.50.620:FF:000007">
    <property type="entry name" value="Glutamate--tRNA ligase"/>
    <property type="match status" value="1"/>
</dbReference>
<dbReference type="Gene3D" id="1.10.10.350">
    <property type="match status" value="1"/>
</dbReference>
<dbReference type="Gene3D" id="3.40.50.620">
    <property type="entry name" value="HUPs"/>
    <property type="match status" value="1"/>
</dbReference>
<dbReference type="HAMAP" id="MF_00022">
    <property type="entry name" value="Glu_tRNA_synth_type1"/>
    <property type="match status" value="1"/>
</dbReference>
<dbReference type="InterPro" id="IPR045462">
    <property type="entry name" value="aa-tRNA-synth_I_cd-bd"/>
</dbReference>
<dbReference type="InterPro" id="IPR020751">
    <property type="entry name" value="aa-tRNA-synth_I_codon-bd_sub2"/>
</dbReference>
<dbReference type="InterPro" id="IPR001412">
    <property type="entry name" value="aa-tRNA-synth_I_CS"/>
</dbReference>
<dbReference type="InterPro" id="IPR008925">
    <property type="entry name" value="aa_tRNA-synth_I_cd-bd_sf"/>
</dbReference>
<dbReference type="InterPro" id="IPR004527">
    <property type="entry name" value="Glu-tRNA-ligase_bac/mito"/>
</dbReference>
<dbReference type="InterPro" id="IPR000924">
    <property type="entry name" value="Glu/Gln-tRNA-synth"/>
</dbReference>
<dbReference type="InterPro" id="IPR020058">
    <property type="entry name" value="Glu/Gln-tRNA-synth_Ib_cat-dom"/>
</dbReference>
<dbReference type="InterPro" id="IPR049940">
    <property type="entry name" value="GluQ/Sye"/>
</dbReference>
<dbReference type="InterPro" id="IPR033910">
    <property type="entry name" value="GluRS_core"/>
</dbReference>
<dbReference type="InterPro" id="IPR014729">
    <property type="entry name" value="Rossmann-like_a/b/a_fold"/>
</dbReference>
<dbReference type="NCBIfam" id="TIGR00464">
    <property type="entry name" value="gltX_bact"/>
    <property type="match status" value="1"/>
</dbReference>
<dbReference type="PANTHER" id="PTHR43311">
    <property type="entry name" value="GLUTAMATE--TRNA LIGASE"/>
    <property type="match status" value="1"/>
</dbReference>
<dbReference type="PANTHER" id="PTHR43311:SF2">
    <property type="entry name" value="GLUTAMATE--TRNA LIGASE, MITOCHONDRIAL-RELATED"/>
    <property type="match status" value="1"/>
</dbReference>
<dbReference type="Pfam" id="PF19269">
    <property type="entry name" value="Anticodon_2"/>
    <property type="match status" value="1"/>
</dbReference>
<dbReference type="Pfam" id="PF00749">
    <property type="entry name" value="tRNA-synt_1c"/>
    <property type="match status" value="1"/>
</dbReference>
<dbReference type="PRINTS" id="PR00987">
    <property type="entry name" value="TRNASYNTHGLU"/>
</dbReference>
<dbReference type="SUPFAM" id="SSF48163">
    <property type="entry name" value="An anticodon-binding domain of class I aminoacyl-tRNA synthetases"/>
    <property type="match status" value="1"/>
</dbReference>
<dbReference type="SUPFAM" id="SSF52374">
    <property type="entry name" value="Nucleotidylyl transferase"/>
    <property type="match status" value="1"/>
</dbReference>
<dbReference type="PROSITE" id="PS00178">
    <property type="entry name" value="AA_TRNA_LIGASE_I"/>
    <property type="match status" value="1"/>
</dbReference>
<evidence type="ECO:0000255" key="1">
    <source>
        <dbReference type="HAMAP-Rule" id="MF_00022"/>
    </source>
</evidence>
<feature type="chain" id="PRO_0000119620" description="Glutamate--tRNA ligase">
    <location>
        <begin position="1"/>
        <end position="472"/>
    </location>
</feature>
<feature type="short sequence motif" description="'HIGH' region" evidence="1">
    <location>
        <begin position="10"/>
        <end position="20"/>
    </location>
</feature>
<feature type="short sequence motif" description="'KMSKS' region" evidence="1">
    <location>
        <begin position="238"/>
        <end position="242"/>
    </location>
</feature>
<feature type="binding site" evidence="1">
    <location>
        <position position="99"/>
    </location>
    <ligand>
        <name>Zn(2+)</name>
        <dbReference type="ChEBI" id="CHEBI:29105"/>
    </ligand>
</feature>
<feature type="binding site" evidence="1">
    <location>
        <position position="101"/>
    </location>
    <ligand>
        <name>Zn(2+)</name>
        <dbReference type="ChEBI" id="CHEBI:29105"/>
    </ligand>
</feature>
<feature type="binding site" evidence="1">
    <location>
        <position position="126"/>
    </location>
    <ligand>
        <name>Zn(2+)</name>
        <dbReference type="ChEBI" id="CHEBI:29105"/>
    </ligand>
</feature>
<feature type="binding site" evidence="1">
    <location>
        <position position="128"/>
    </location>
    <ligand>
        <name>Zn(2+)</name>
        <dbReference type="ChEBI" id="CHEBI:29105"/>
    </ligand>
</feature>
<feature type="binding site" evidence="1">
    <location>
        <position position="241"/>
    </location>
    <ligand>
        <name>ATP</name>
        <dbReference type="ChEBI" id="CHEBI:30616"/>
    </ligand>
</feature>
<reference key="1">
    <citation type="journal article" date="2003" name="Nat. Biotechnol.">
        <title>The genome sequence of the entomopathogenic bacterium Photorhabdus luminescens.</title>
        <authorList>
            <person name="Duchaud E."/>
            <person name="Rusniok C."/>
            <person name="Frangeul L."/>
            <person name="Buchrieser C."/>
            <person name="Givaudan A."/>
            <person name="Taourit S."/>
            <person name="Bocs S."/>
            <person name="Boursaux-Eude C."/>
            <person name="Chandler M."/>
            <person name="Charles J.-F."/>
            <person name="Dassa E."/>
            <person name="Derose R."/>
            <person name="Derzelle S."/>
            <person name="Freyssinet G."/>
            <person name="Gaudriault S."/>
            <person name="Medigue C."/>
            <person name="Lanois A."/>
            <person name="Powell K."/>
            <person name="Siguier P."/>
            <person name="Vincent R."/>
            <person name="Wingate V."/>
            <person name="Zouine M."/>
            <person name="Glaser P."/>
            <person name="Boemare N."/>
            <person name="Danchin A."/>
            <person name="Kunst F."/>
        </authorList>
    </citation>
    <scope>NUCLEOTIDE SEQUENCE [LARGE SCALE GENOMIC DNA]</scope>
    <source>
        <strain>DSM 15139 / CIP 105565 / TT01</strain>
    </source>
</reference>
<organism>
    <name type="scientific">Photorhabdus laumondii subsp. laumondii (strain DSM 15139 / CIP 105565 / TT01)</name>
    <name type="common">Photorhabdus luminescens subsp. laumondii</name>
    <dbReference type="NCBI Taxonomy" id="243265"/>
    <lineage>
        <taxon>Bacteria</taxon>
        <taxon>Pseudomonadati</taxon>
        <taxon>Pseudomonadota</taxon>
        <taxon>Gammaproteobacteria</taxon>
        <taxon>Enterobacterales</taxon>
        <taxon>Morganellaceae</taxon>
        <taxon>Photorhabdus</taxon>
    </lineage>
</organism>
<name>SYE_PHOLL</name>
<proteinExistence type="inferred from homology"/>